<evidence type="ECO:0000255" key="1">
    <source>
        <dbReference type="HAMAP-Rule" id="MF_01024"/>
    </source>
</evidence>
<protein>
    <recommendedName>
        <fullName evidence="1">Histidinol dehydrogenase</fullName>
        <shortName evidence="1">HDH</shortName>
        <ecNumber evidence="1">1.1.1.23</ecNumber>
    </recommendedName>
</protein>
<keyword id="KW-0028">Amino-acid biosynthesis</keyword>
<keyword id="KW-0368">Histidine biosynthesis</keyword>
<keyword id="KW-0479">Metal-binding</keyword>
<keyword id="KW-0520">NAD</keyword>
<keyword id="KW-0560">Oxidoreductase</keyword>
<keyword id="KW-0862">Zinc</keyword>
<comment type="function">
    <text evidence="1">Catalyzes the sequential NAD-dependent oxidations of L-histidinol to L-histidinaldehyde and then to L-histidine.</text>
</comment>
<comment type="catalytic activity">
    <reaction evidence="1">
        <text>L-histidinol + 2 NAD(+) + H2O = L-histidine + 2 NADH + 3 H(+)</text>
        <dbReference type="Rhea" id="RHEA:20641"/>
        <dbReference type="ChEBI" id="CHEBI:15377"/>
        <dbReference type="ChEBI" id="CHEBI:15378"/>
        <dbReference type="ChEBI" id="CHEBI:57540"/>
        <dbReference type="ChEBI" id="CHEBI:57595"/>
        <dbReference type="ChEBI" id="CHEBI:57699"/>
        <dbReference type="ChEBI" id="CHEBI:57945"/>
        <dbReference type="EC" id="1.1.1.23"/>
    </reaction>
</comment>
<comment type="cofactor">
    <cofactor evidence="1">
        <name>Zn(2+)</name>
        <dbReference type="ChEBI" id="CHEBI:29105"/>
    </cofactor>
    <text evidence="1">Binds 1 zinc ion per subunit.</text>
</comment>
<comment type="pathway">
    <text evidence="1">Amino-acid biosynthesis; L-histidine biosynthesis; L-histidine from 5-phospho-alpha-D-ribose 1-diphosphate: step 9/9.</text>
</comment>
<comment type="similarity">
    <text evidence="1">Belongs to the histidinol dehydrogenase family.</text>
</comment>
<reference key="1">
    <citation type="journal article" date="2006" name="J. Bacteriol.">
        <title>Pathogenomic sequence analysis of Bacillus cereus and Bacillus thuringiensis isolates closely related to Bacillus anthracis.</title>
        <authorList>
            <person name="Han C.S."/>
            <person name="Xie G."/>
            <person name="Challacombe J.F."/>
            <person name="Altherr M.R."/>
            <person name="Bhotika S.S."/>
            <person name="Bruce D."/>
            <person name="Campbell C.S."/>
            <person name="Campbell M.L."/>
            <person name="Chen J."/>
            <person name="Chertkov O."/>
            <person name="Cleland C."/>
            <person name="Dimitrijevic M."/>
            <person name="Doggett N.A."/>
            <person name="Fawcett J.J."/>
            <person name="Glavina T."/>
            <person name="Goodwin L.A."/>
            <person name="Hill K.K."/>
            <person name="Hitchcock P."/>
            <person name="Jackson P.J."/>
            <person name="Keim P."/>
            <person name="Kewalramani A.R."/>
            <person name="Longmire J."/>
            <person name="Lucas S."/>
            <person name="Malfatti S."/>
            <person name="McMurry K."/>
            <person name="Meincke L.J."/>
            <person name="Misra M."/>
            <person name="Moseman B.L."/>
            <person name="Mundt M."/>
            <person name="Munk A.C."/>
            <person name="Okinaka R.T."/>
            <person name="Parson-Quintana B."/>
            <person name="Reilly L.P."/>
            <person name="Richardson P."/>
            <person name="Robinson D.L."/>
            <person name="Rubin E."/>
            <person name="Saunders E."/>
            <person name="Tapia R."/>
            <person name="Tesmer J.G."/>
            <person name="Thayer N."/>
            <person name="Thompson L.S."/>
            <person name="Tice H."/>
            <person name="Ticknor L.O."/>
            <person name="Wills P.L."/>
            <person name="Brettin T.S."/>
            <person name="Gilna P."/>
        </authorList>
    </citation>
    <scope>NUCLEOTIDE SEQUENCE [LARGE SCALE GENOMIC DNA]</scope>
    <source>
        <strain>97-27</strain>
    </source>
</reference>
<feature type="chain" id="PRO_0000135729" description="Histidinol dehydrogenase">
    <location>
        <begin position="1"/>
        <end position="429"/>
    </location>
</feature>
<feature type="active site" description="Proton acceptor" evidence="1">
    <location>
        <position position="324"/>
    </location>
</feature>
<feature type="active site" description="Proton acceptor" evidence="1">
    <location>
        <position position="325"/>
    </location>
</feature>
<feature type="binding site" evidence="1">
    <location>
        <position position="127"/>
    </location>
    <ligand>
        <name>NAD(+)</name>
        <dbReference type="ChEBI" id="CHEBI:57540"/>
    </ligand>
</feature>
<feature type="binding site" evidence="1">
    <location>
        <position position="188"/>
    </location>
    <ligand>
        <name>NAD(+)</name>
        <dbReference type="ChEBI" id="CHEBI:57540"/>
    </ligand>
</feature>
<feature type="binding site" evidence="1">
    <location>
        <position position="211"/>
    </location>
    <ligand>
        <name>NAD(+)</name>
        <dbReference type="ChEBI" id="CHEBI:57540"/>
    </ligand>
</feature>
<feature type="binding site" evidence="1">
    <location>
        <position position="234"/>
    </location>
    <ligand>
        <name>substrate</name>
    </ligand>
</feature>
<feature type="binding site" evidence="1">
    <location>
        <position position="256"/>
    </location>
    <ligand>
        <name>substrate</name>
    </ligand>
</feature>
<feature type="binding site" evidence="1">
    <location>
        <position position="256"/>
    </location>
    <ligand>
        <name>Zn(2+)</name>
        <dbReference type="ChEBI" id="CHEBI:29105"/>
    </ligand>
</feature>
<feature type="binding site" evidence="1">
    <location>
        <position position="259"/>
    </location>
    <ligand>
        <name>substrate</name>
    </ligand>
</feature>
<feature type="binding site" evidence="1">
    <location>
        <position position="259"/>
    </location>
    <ligand>
        <name>Zn(2+)</name>
        <dbReference type="ChEBI" id="CHEBI:29105"/>
    </ligand>
</feature>
<feature type="binding site" evidence="1">
    <location>
        <position position="325"/>
    </location>
    <ligand>
        <name>substrate</name>
    </ligand>
</feature>
<feature type="binding site" evidence="1">
    <location>
        <position position="358"/>
    </location>
    <ligand>
        <name>substrate</name>
    </ligand>
</feature>
<feature type="binding site" evidence="1">
    <location>
        <position position="358"/>
    </location>
    <ligand>
        <name>Zn(2+)</name>
        <dbReference type="ChEBI" id="CHEBI:29105"/>
    </ligand>
</feature>
<feature type="binding site" evidence="1">
    <location>
        <position position="412"/>
    </location>
    <ligand>
        <name>substrate</name>
    </ligand>
</feature>
<feature type="binding site" evidence="1">
    <location>
        <position position="417"/>
    </location>
    <ligand>
        <name>substrate</name>
    </ligand>
</feature>
<feature type="binding site" evidence="1">
    <location>
        <position position="417"/>
    </location>
    <ligand>
        <name>Zn(2+)</name>
        <dbReference type="ChEBI" id="CHEBI:29105"/>
    </ligand>
</feature>
<sequence>MEIVCEDFQKVLTKIKLLRENANIIEETVQRSVREIVQNVRESRDEALFFYTKKFDGVEIKDVRVSEEEIKQASMFVESSFLEALQEAKKNIISYHEKQKRQSMFDCTSKGIIRGQIIRPLENIGVYVPGGTASYPSSVLMNVLPAKLAGVKKIVMVTPPRAGGIDPHILVAASLAGVDEIYMIGGAQAIAALAYGTESIPKVDKIVGPGNLYVALAKREVYGIVNIDMIAGPSEIVVIADETGNAKYIAADLLSQAEHDERATAICITTNIELAKEVEKEIERQLETLPRSEIARESINRNGAIFIVPSIDEALQLSNEIAPEHLELHIKEPMNALAYVKHAGSIFLGPYAPEPLGDYLAGPNHVLPTSGTARFFSPLSVDDFVKKSSFLSYTEEALRDVKHHIVELANKEGLHAHAKAIQIRFGEEE</sequence>
<name>HISX_BACHK</name>
<dbReference type="EC" id="1.1.1.23" evidence="1"/>
<dbReference type="EMBL" id="AE017355">
    <property type="protein sequence ID" value="AAT59418.1"/>
    <property type="molecule type" value="Genomic_DNA"/>
</dbReference>
<dbReference type="RefSeq" id="WP_000406995.1">
    <property type="nucleotide sequence ID" value="NC_005957.1"/>
</dbReference>
<dbReference type="RefSeq" id="YP_035624.1">
    <property type="nucleotide sequence ID" value="NC_005957.1"/>
</dbReference>
<dbReference type="SMR" id="Q6HLE7"/>
<dbReference type="KEGG" id="btk:BT9727_1290"/>
<dbReference type="PATRIC" id="fig|281309.8.peg.1359"/>
<dbReference type="HOGENOM" id="CLU_006732_3_3_9"/>
<dbReference type="UniPathway" id="UPA00031">
    <property type="reaction ID" value="UER00014"/>
</dbReference>
<dbReference type="Proteomes" id="UP000001301">
    <property type="component" value="Chromosome"/>
</dbReference>
<dbReference type="GO" id="GO:0005829">
    <property type="term" value="C:cytosol"/>
    <property type="evidence" value="ECO:0007669"/>
    <property type="project" value="TreeGrafter"/>
</dbReference>
<dbReference type="GO" id="GO:0004399">
    <property type="term" value="F:histidinol dehydrogenase activity"/>
    <property type="evidence" value="ECO:0007669"/>
    <property type="project" value="UniProtKB-UniRule"/>
</dbReference>
<dbReference type="GO" id="GO:0051287">
    <property type="term" value="F:NAD binding"/>
    <property type="evidence" value="ECO:0007669"/>
    <property type="project" value="InterPro"/>
</dbReference>
<dbReference type="GO" id="GO:0008270">
    <property type="term" value="F:zinc ion binding"/>
    <property type="evidence" value="ECO:0007669"/>
    <property type="project" value="UniProtKB-UniRule"/>
</dbReference>
<dbReference type="GO" id="GO:0000105">
    <property type="term" value="P:L-histidine biosynthetic process"/>
    <property type="evidence" value="ECO:0007669"/>
    <property type="project" value="UniProtKB-UniRule"/>
</dbReference>
<dbReference type="CDD" id="cd06572">
    <property type="entry name" value="Histidinol_dh"/>
    <property type="match status" value="1"/>
</dbReference>
<dbReference type="FunFam" id="3.40.50.1980:FF:000001">
    <property type="entry name" value="Histidinol dehydrogenase"/>
    <property type="match status" value="1"/>
</dbReference>
<dbReference type="FunFam" id="3.40.50.1980:FF:000026">
    <property type="entry name" value="Histidinol dehydrogenase"/>
    <property type="match status" value="1"/>
</dbReference>
<dbReference type="FunFam" id="1.20.5.1300:FF:000002">
    <property type="entry name" value="Histidinol dehydrogenase, chloroplastic"/>
    <property type="match status" value="1"/>
</dbReference>
<dbReference type="Gene3D" id="1.20.5.1300">
    <property type="match status" value="1"/>
</dbReference>
<dbReference type="Gene3D" id="3.40.50.1980">
    <property type="entry name" value="Nitrogenase molybdenum iron protein domain"/>
    <property type="match status" value="2"/>
</dbReference>
<dbReference type="HAMAP" id="MF_01024">
    <property type="entry name" value="HisD"/>
    <property type="match status" value="1"/>
</dbReference>
<dbReference type="InterPro" id="IPR016161">
    <property type="entry name" value="Ald_DH/histidinol_DH"/>
</dbReference>
<dbReference type="InterPro" id="IPR001692">
    <property type="entry name" value="Histidinol_DH_CS"/>
</dbReference>
<dbReference type="InterPro" id="IPR022695">
    <property type="entry name" value="Histidinol_DH_monofunct"/>
</dbReference>
<dbReference type="InterPro" id="IPR012131">
    <property type="entry name" value="Hstdl_DH"/>
</dbReference>
<dbReference type="NCBIfam" id="TIGR00069">
    <property type="entry name" value="hisD"/>
    <property type="match status" value="1"/>
</dbReference>
<dbReference type="PANTHER" id="PTHR21256:SF2">
    <property type="entry name" value="HISTIDINE BIOSYNTHESIS TRIFUNCTIONAL PROTEIN"/>
    <property type="match status" value="1"/>
</dbReference>
<dbReference type="PANTHER" id="PTHR21256">
    <property type="entry name" value="HISTIDINOL DEHYDROGENASE HDH"/>
    <property type="match status" value="1"/>
</dbReference>
<dbReference type="Pfam" id="PF00815">
    <property type="entry name" value="Histidinol_dh"/>
    <property type="match status" value="1"/>
</dbReference>
<dbReference type="PIRSF" id="PIRSF000099">
    <property type="entry name" value="Histidinol_dh"/>
    <property type="match status" value="1"/>
</dbReference>
<dbReference type="PRINTS" id="PR00083">
    <property type="entry name" value="HOLDHDRGNASE"/>
</dbReference>
<dbReference type="SUPFAM" id="SSF53720">
    <property type="entry name" value="ALDH-like"/>
    <property type="match status" value="1"/>
</dbReference>
<dbReference type="PROSITE" id="PS00611">
    <property type="entry name" value="HISOL_DEHYDROGENASE"/>
    <property type="match status" value="1"/>
</dbReference>
<accession>Q6HLE7</accession>
<gene>
    <name evidence="1" type="primary">hisD</name>
    <name type="ordered locus">BT9727_1290</name>
</gene>
<organism>
    <name type="scientific">Bacillus thuringiensis subsp. konkukian (strain 97-27)</name>
    <dbReference type="NCBI Taxonomy" id="281309"/>
    <lineage>
        <taxon>Bacteria</taxon>
        <taxon>Bacillati</taxon>
        <taxon>Bacillota</taxon>
        <taxon>Bacilli</taxon>
        <taxon>Bacillales</taxon>
        <taxon>Bacillaceae</taxon>
        <taxon>Bacillus</taxon>
        <taxon>Bacillus cereus group</taxon>
    </lineage>
</organism>
<proteinExistence type="inferred from homology"/>